<feature type="chain" id="PRO_0000449234" description="Cytochrome P450 71AP13">
    <location>
        <begin position="1"/>
        <end position="514"/>
    </location>
</feature>
<feature type="transmembrane region" description="Helical" evidence="2">
    <location>
        <begin position="20"/>
        <end position="37"/>
    </location>
</feature>
<feature type="binding site" description="axial binding residue" evidence="1">
    <location>
        <position position="455"/>
    </location>
    <ligand>
        <name>heme</name>
        <dbReference type="ChEBI" id="CHEBI:30413"/>
    </ligand>
    <ligandPart>
        <name>Fe</name>
        <dbReference type="ChEBI" id="CHEBI:18248"/>
    </ligandPart>
</feature>
<feature type="glycosylation site" description="N-linked (GlcNAc...) asparagine" evidence="3">
    <location>
        <position position="127"/>
    </location>
</feature>
<feature type="glycosylation site" description="N-linked (GlcNAc...) asparagine" evidence="3">
    <location>
        <position position="184"/>
    </location>
</feature>
<protein>
    <recommendedName>
        <fullName evidence="5">Cytochrome P450 71AP13</fullName>
        <ecNumber evidence="6">1.14.-.-</ecNumber>
    </recommendedName>
</protein>
<organism>
    <name type="scientific">Prunus mume</name>
    <name type="common">Japanese apricot</name>
    <name type="synonym">Armeniaca mume</name>
    <dbReference type="NCBI Taxonomy" id="102107"/>
    <lineage>
        <taxon>Eukaryota</taxon>
        <taxon>Viridiplantae</taxon>
        <taxon>Streptophyta</taxon>
        <taxon>Embryophyta</taxon>
        <taxon>Tracheophyta</taxon>
        <taxon>Spermatophyta</taxon>
        <taxon>Magnoliopsida</taxon>
        <taxon>eudicotyledons</taxon>
        <taxon>Gunneridae</taxon>
        <taxon>Pentapetalae</taxon>
        <taxon>rosids</taxon>
        <taxon>fabids</taxon>
        <taxon>Rosales</taxon>
        <taxon>Rosaceae</taxon>
        <taxon>Amygdaloideae</taxon>
        <taxon>Amygdaleae</taxon>
        <taxon>Prunus</taxon>
    </lineage>
</organism>
<evidence type="ECO:0000250" key="1">
    <source>
        <dbReference type="UniProtKB" id="P04798"/>
    </source>
</evidence>
<evidence type="ECO:0000255" key="2"/>
<evidence type="ECO:0000255" key="3">
    <source>
        <dbReference type="PROSITE-ProRule" id="PRU00498"/>
    </source>
</evidence>
<evidence type="ECO:0000269" key="4">
    <source>
    </source>
</evidence>
<evidence type="ECO:0000303" key="5">
    <source>
    </source>
</evidence>
<evidence type="ECO:0000305" key="6"/>
<sequence length="514" mass="58681">MYSVLVQETPMALLQLLKEHSSLFAFSLLILLLKFIYKDKSRKRRVKLPPSPPKLPVIGNLHQLGNKPHLSLRCLAEKYGPIIYLQLGEIPTVVVSSARLAKEVLKTHDLALSSRPQIFSAKHLFYNCTDVVFSPYGAYWRHIRKICILELLSAKRVQSFSHVREEEVARLVRRVAEFYPGTTNLTKMLGLYANDVLCRVAFGRGFSEGGDYDRHGFQKMLEEYQELLGGFSIGDFFPSMEFIHSLTGMKSRLQETFRRFDELFDQMVTDHLSPKREKEEHKDLVDVLLDIQKKESTEMPLTMDNVKAIILDMFAAGTDTTFITLDWGMTELLMNRKVLERAQAEVRGVVGERRVVLESDLPQLDYMKAVIKEIFRLHPPAPVLVPRESMEDVTIDGYDILAKTRIFVNAWAIGRDPESWEDPEAFEPERFIGSTIDFKGQDFELIPFGAGRRGCPAVTFGTATIELALAQLLHTFDWELPLDTAAKDLDMTEVFGITMHRIANLIVVARPRFP</sequence>
<keyword id="KW-0325">Glycoprotein</keyword>
<keyword id="KW-0349">Heme</keyword>
<keyword id="KW-0408">Iron</keyword>
<keyword id="KW-0472">Membrane</keyword>
<keyword id="KW-0479">Metal-binding</keyword>
<keyword id="KW-0503">Monooxygenase</keyword>
<keyword id="KW-0560">Oxidoreductase</keyword>
<keyword id="KW-0812">Transmembrane</keyword>
<keyword id="KW-1133">Transmembrane helix</keyword>
<gene>
    <name evidence="5" type="primary">CYP71AP13</name>
</gene>
<accession>A0A068Q721</accession>
<comment type="cofactor">
    <cofactor evidence="1">
        <name>heme</name>
        <dbReference type="ChEBI" id="CHEBI:30413"/>
    </cofactor>
</comment>
<comment type="subcellular location">
    <subcellularLocation>
        <location evidence="2">Membrane</location>
        <topology evidence="2">Single-pass membrane protein</topology>
    </subcellularLocation>
</comment>
<comment type="tissue specificity">
    <text evidence="4">Expressed in fruit kernel, seedlings, leaves and stems.</text>
</comment>
<comment type="similarity">
    <text evidence="6">Belongs to the cytochrome P450 family.</text>
</comment>
<name>C7113_PRUMU</name>
<reference key="1">
    <citation type="journal article" date="2014" name="Plant Mol. Biol.">
        <title>Identification and characterization of CYP79D16 and CYP71AN24 catalyzing the first and second steps in L-phenylalanine-derived cyanogenic glycoside biosynthesis in the Japanese apricot, Prunus mume Sieb. et Zucc.</title>
        <authorList>
            <person name="Yamaguchi T."/>
            <person name="Yamamoto K."/>
            <person name="Asano Y."/>
        </authorList>
    </citation>
    <scope>NUCLEOTIDE SEQUENCE [MRNA]</scope>
    <scope>TISSUE SPECIFICITY</scope>
    <source>
        <strain>cv. Nanko</strain>
        <tissue>Seedling</tissue>
    </source>
</reference>
<dbReference type="EC" id="1.14.-.-" evidence="6"/>
<dbReference type="EMBL" id="AB920489">
    <property type="protein sequence ID" value="BAP15885.1"/>
    <property type="molecule type" value="mRNA"/>
</dbReference>
<dbReference type="RefSeq" id="NP_001313441.1">
    <property type="nucleotide sequence ID" value="NM_001326512.1"/>
</dbReference>
<dbReference type="SMR" id="A0A068Q721"/>
<dbReference type="GlyCosmos" id="A0A068Q721">
    <property type="glycosylation" value="2 sites, No reported glycans"/>
</dbReference>
<dbReference type="GeneID" id="103337960"/>
<dbReference type="Proteomes" id="UP000694861">
    <property type="component" value="Unplaced"/>
</dbReference>
<dbReference type="GO" id="GO:0016020">
    <property type="term" value="C:membrane"/>
    <property type="evidence" value="ECO:0007669"/>
    <property type="project" value="UniProtKB-SubCell"/>
</dbReference>
<dbReference type="GO" id="GO:0020037">
    <property type="term" value="F:heme binding"/>
    <property type="evidence" value="ECO:0007669"/>
    <property type="project" value="InterPro"/>
</dbReference>
<dbReference type="GO" id="GO:0005506">
    <property type="term" value="F:iron ion binding"/>
    <property type="evidence" value="ECO:0007669"/>
    <property type="project" value="InterPro"/>
</dbReference>
<dbReference type="GO" id="GO:0004497">
    <property type="term" value="F:monooxygenase activity"/>
    <property type="evidence" value="ECO:0007669"/>
    <property type="project" value="UniProtKB-KW"/>
</dbReference>
<dbReference type="GO" id="GO:0016705">
    <property type="term" value="F:oxidoreductase activity, acting on paired donors, with incorporation or reduction of molecular oxygen"/>
    <property type="evidence" value="ECO:0007669"/>
    <property type="project" value="InterPro"/>
</dbReference>
<dbReference type="CDD" id="cd11072">
    <property type="entry name" value="CYP71-like"/>
    <property type="match status" value="1"/>
</dbReference>
<dbReference type="FunFam" id="1.10.630.10:FF:000043">
    <property type="entry name" value="Cytochrome P450 99A2"/>
    <property type="match status" value="1"/>
</dbReference>
<dbReference type="Gene3D" id="1.10.630.10">
    <property type="entry name" value="Cytochrome P450"/>
    <property type="match status" value="1"/>
</dbReference>
<dbReference type="InterPro" id="IPR001128">
    <property type="entry name" value="Cyt_P450"/>
</dbReference>
<dbReference type="InterPro" id="IPR017972">
    <property type="entry name" value="Cyt_P450_CS"/>
</dbReference>
<dbReference type="InterPro" id="IPR002401">
    <property type="entry name" value="Cyt_P450_E_grp-I"/>
</dbReference>
<dbReference type="InterPro" id="IPR036396">
    <property type="entry name" value="Cyt_P450_sf"/>
</dbReference>
<dbReference type="PANTHER" id="PTHR47955:SF19">
    <property type="entry name" value="CYTOCHROME P450 71A9-LIKE ISOFORM X1"/>
    <property type="match status" value="1"/>
</dbReference>
<dbReference type="PANTHER" id="PTHR47955">
    <property type="entry name" value="CYTOCHROME P450 FAMILY 71 PROTEIN"/>
    <property type="match status" value="1"/>
</dbReference>
<dbReference type="Pfam" id="PF00067">
    <property type="entry name" value="p450"/>
    <property type="match status" value="1"/>
</dbReference>
<dbReference type="PRINTS" id="PR00463">
    <property type="entry name" value="EP450I"/>
</dbReference>
<dbReference type="PRINTS" id="PR00385">
    <property type="entry name" value="P450"/>
</dbReference>
<dbReference type="SUPFAM" id="SSF48264">
    <property type="entry name" value="Cytochrome P450"/>
    <property type="match status" value="1"/>
</dbReference>
<dbReference type="PROSITE" id="PS00086">
    <property type="entry name" value="CYTOCHROME_P450"/>
    <property type="match status" value="1"/>
</dbReference>
<proteinExistence type="evidence at transcript level"/>